<sequence>MLRPQLNPSSSHHHTTTTSSSSSTQLYFASSSCIASLRRPSPPSLIAGAGCRTTRRRQQGRQRVVVRCASSSAASSASEAARRGTGSSDMAPAAVVKVKAVATIKVTVEGLLNSLRPSKAIDNIRDLIGRSLFLELVSSELEAKTGKKKATVHSYAHKVDDDDHGVVTYEADFDVPTGFGPIGAVVVTNELGQEMFLEDLNLTAGDGAGNSTVLPIRCNSWVQPKSSIDEGTPGKRIFFAKAYLPGQTPAGLRSYREEDLKQKRGNGAGQREADDRVYDYDVYNDLGNPDSNGDLARPVLGGSKQFPYPRRCRTGRPPSKKDPKSETRKGNVYVPRDEEFSEVKNAQFLLKTLQSVLHAAVPAAQSALIDNLSLNLPFPSFFVIDKLFEDGVELPGVEKLGFLHSIVPRLLELLRDSPGDKILLFDTPANVQKDKFAWLRDEEFARETLAGINPYAIELVREFPLKSKLDPAVYGPAESAITADLLEEQMRRVMTVEEAISQKRLFMLDFHDLFLPYVHKIRSLKHTTMYGSRTIFFLTDDGTLRLLAIELTRPASPSQPQWRQVFTPSTDTTKSWLWRMAKAHVRAHDAGHHELITHWLRTHCAVEPYIIAANRQLSEMHPIYQLLHPHFRYTMRINALARSRLISAAGIIELSFSPQKYSMELSSVAYDKLWRFDMEALPADLVRRGMAEEDPTAEHGLRLAIEDYPFANDGLLIWDAIKTWVQAYVARFYPDADSVAGDEELQAFWTEVRTKGHGDKKDAPWWPKLDSPESLAHTLTTIVWVAAAHHAAVNFGQYDFGGYFPNRPSIARTVMPVEEPVDGAAMERFLDNPDQALRECFPSQVQATVVMAVLDVLSTHSTDEEYLGGEQTRPWNSDAAVQAAYAGFTARLKEIEGVIDGRNKDRKLKNRCGAGILPYQLMKPFSDAGVTGMGIPNSTSI</sequence>
<name>LOXC2_ORYSJ</name>
<dbReference type="EC" id="1.13.11.12"/>
<dbReference type="EMBL" id="AP005816">
    <property type="protein sequence ID" value="BAD10668.1"/>
    <property type="molecule type" value="Genomic_DNA"/>
</dbReference>
<dbReference type="EMBL" id="AP005816">
    <property type="protein sequence ID" value="BAD10669.1"/>
    <property type="status" value="ALT_SEQ"/>
    <property type="molecule type" value="Genomic_DNA"/>
</dbReference>
<dbReference type="EMBL" id="AP006049">
    <property type="protein sequence ID" value="BAC57390.1"/>
    <property type="molecule type" value="Genomic_DNA"/>
</dbReference>
<dbReference type="EMBL" id="AP006049">
    <property type="protein sequence ID" value="BAD10729.1"/>
    <property type="status" value="ALT_SEQ"/>
    <property type="molecule type" value="Genomic_DNA"/>
</dbReference>
<dbReference type="EMBL" id="AP008214">
    <property type="protein sequence ID" value="BAF24114.1"/>
    <property type="molecule type" value="Genomic_DNA"/>
</dbReference>
<dbReference type="EMBL" id="AP014964">
    <property type="protein sequence ID" value="BAT06179.1"/>
    <property type="molecule type" value="Genomic_DNA"/>
</dbReference>
<dbReference type="EMBL" id="AK066825">
    <property type="protein sequence ID" value="BAG90142.1"/>
    <property type="molecule type" value="mRNA"/>
</dbReference>
<dbReference type="EMBL" id="AF095896">
    <property type="protein sequence ID" value="AAD42043.1"/>
    <property type="molecule type" value="mRNA"/>
</dbReference>
<dbReference type="RefSeq" id="XP_015650450.1">
    <property type="nucleotide sequence ID" value="XM_015794964.1"/>
</dbReference>
<dbReference type="SMR" id="Q84YK8"/>
<dbReference type="FunCoup" id="Q84YK8">
    <property type="interactions" value="211"/>
</dbReference>
<dbReference type="STRING" id="39947.Q84YK8"/>
<dbReference type="PaxDb" id="39947-Q84YK8"/>
<dbReference type="EnsemblPlants" id="Os08t0509100-01">
    <property type="protein sequence ID" value="Os08t0509100-01"/>
    <property type="gene ID" value="Os08g0509100"/>
</dbReference>
<dbReference type="Gramene" id="Os08t0509100-01">
    <property type="protein sequence ID" value="Os08t0509100-01"/>
    <property type="gene ID" value="Os08g0509100"/>
</dbReference>
<dbReference type="KEGG" id="dosa:Os08g0509100"/>
<dbReference type="eggNOG" id="ENOG502QQSP">
    <property type="taxonomic scope" value="Eukaryota"/>
</dbReference>
<dbReference type="HOGENOM" id="CLU_004282_0_0_1"/>
<dbReference type="InParanoid" id="Q84YK8"/>
<dbReference type="OMA" id="HSYAHKV"/>
<dbReference type="OrthoDB" id="407298at2759"/>
<dbReference type="PlantReactome" id="R-OSA-1119332">
    <property type="pathway name" value="Jasmonic acid biosynthesis"/>
</dbReference>
<dbReference type="PlantReactome" id="R-OSA-1119566">
    <property type="pathway name" value="Divinyl ether biosynthesis II (13-LOX)"/>
</dbReference>
<dbReference type="PlantReactome" id="R-OSA-1119618">
    <property type="pathway name" value="13-LOX and 13-HPL pathway"/>
</dbReference>
<dbReference type="UniPathway" id="UPA00382"/>
<dbReference type="Proteomes" id="UP000000763">
    <property type="component" value="Chromosome 8"/>
</dbReference>
<dbReference type="Proteomes" id="UP000059680">
    <property type="component" value="Chromosome 8"/>
</dbReference>
<dbReference type="ExpressionAtlas" id="Q84YK8">
    <property type="expression patterns" value="baseline and differential"/>
</dbReference>
<dbReference type="GO" id="GO:0009507">
    <property type="term" value="C:chloroplast"/>
    <property type="evidence" value="ECO:0007669"/>
    <property type="project" value="UniProtKB-SubCell"/>
</dbReference>
<dbReference type="GO" id="GO:0016165">
    <property type="term" value="F:linoleate 13S-lipoxygenase activity"/>
    <property type="evidence" value="ECO:0007669"/>
    <property type="project" value="UniProtKB-EC"/>
</dbReference>
<dbReference type="GO" id="GO:0046872">
    <property type="term" value="F:metal ion binding"/>
    <property type="evidence" value="ECO:0007669"/>
    <property type="project" value="UniProtKB-KW"/>
</dbReference>
<dbReference type="GO" id="GO:0016702">
    <property type="term" value="F:oxidoreductase activity, acting on single donors with incorporation of molecular oxygen, incorporation of two atoms of oxygen"/>
    <property type="evidence" value="ECO:0000318"/>
    <property type="project" value="GO_Central"/>
</dbReference>
<dbReference type="GO" id="GO:0006633">
    <property type="term" value="P:fatty acid biosynthetic process"/>
    <property type="evidence" value="ECO:0007669"/>
    <property type="project" value="UniProtKB-KW"/>
</dbReference>
<dbReference type="GO" id="GO:0034440">
    <property type="term" value="P:lipid oxidation"/>
    <property type="evidence" value="ECO:0000318"/>
    <property type="project" value="GO_Central"/>
</dbReference>
<dbReference type="GO" id="GO:0031408">
    <property type="term" value="P:oxylipin biosynthetic process"/>
    <property type="evidence" value="ECO:0007669"/>
    <property type="project" value="UniProtKB-UniPathway"/>
</dbReference>
<dbReference type="CDD" id="cd01751">
    <property type="entry name" value="PLAT_LH2"/>
    <property type="match status" value="1"/>
</dbReference>
<dbReference type="FunFam" id="1.20.245.10:FF:000002">
    <property type="entry name" value="Lipoxygenase"/>
    <property type="match status" value="1"/>
</dbReference>
<dbReference type="FunFam" id="3.10.450.60:FF:000005">
    <property type="entry name" value="Lipoxygenase"/>
    <property type="match status" value="1"/>
</dbReference>
<dbReference type="FunFam" id="4.10.375.10:FF:000001">
    <property type="entry name" value="Lipoxygenase"/>
    <property type="match status" value="1"/>
</dbReference>
<dbReference type="Gene3D" id="3.10.450.60">
    <property type="match status" value="1"/>
</dbReference>
<dbReference type="Gene3D" id="4.10.375.10">
    <property type="entry name" value="Lipoxygenase-1, Domain 2"/>
    <property type="match status" value="1"/>
</dbReference>
<dbReference type="Gene3D" id="4.10.372.10">
    <property type="entry name" value="Lipoxygenase-1, Domain 3"/>
    <property type="match status" value="1"/>
</dbReference>
<dbReference type="Gene3D" id="1.20.245.10">
    <property type="entry name" value="Lipoxygenase-1, Domain 5"/>
    <property type="match status" value="1"/>
</dbReference>
<dbReference type="Gene3D" id="2.60.60.20">
    <property type="entry name" value="PLAT/LH2 domain"/>
    <property type="match status" value="1"/>
</dbReference>
<dbReference type="InterPro" id="IPR000907">
    <property type="entry name" value="LipOase"/>
</dbReference>
<dbReference type="InterPro" id="IPR013819">
    <property type="entry name" value="LipOase_C"/>
</dbReference>
<dbReference type="InterPro" id="IPR036226">
    <property type="entry name" value="LipOase_C_sf"/>
</dbReference>
<dbReference type="InterPro" id="IPR020834">
    <property type="entry name" value="LipOase_CS"/>
</dbReference>
<dbReference type="InterPro" id="IPR020833">
    <property type="entry name" value="LipOase_Fe_BS"/>
</dbReference>
<dbReference type="InterPro" id="IPR001246">
    <property type="entry name" value="LipOase_plant"/>
</dbReference>
<dbReference type="InterPro" id="IPR042057">
    <property type="entry name" value="Lipoxy_PLAT/LH2"/>
</dbReference>
<dbReference type="InterPro" id="IPR027433">
    <property type="entry name" value="Lipoxygenase_dom_3"/>
</dbReference>
<dbReference type="InterPro" id="IPR001024">
    <property type="entry name" value="PLAT/LH2_dom"/>
</dbReference>
<dbReference type="InterPro" id="IPR036392">
    <property type="entry name" value="PLAT/LH2_dom_sf"/>
</dbReference>
<dbReference type="PANTHER" id="PTHR11771">
    <property type="entry name" value="LIPOXYGENASE"/>
    <property type="match status" value="1"/>
</dbReference>
<dbReference type="Pfam" id="PF00305">
    <property type="entry name" value="Lipoxygenase"/>
    <property type="match status" value="1"/>
</dbReference>
<dbReference type="Pfam" id="PF01477">
    <property type="entry name" value="PLAT"/>
    <property type="match status" value="1"/>
</dbReference>
<dbReference type="PRINTS" id="PR00087">
    <property type="entry name" value="LIPOXYGENASE"/>
</dbReference>
<dbReference type="PRINTS" id="PR00468">
    <property type="entry name" value="PLTLPOXGNASE"/>
</dbReference>
<dbReference type="SMART" id="SM00308">
    <property type="entry name" value="LH2"/>
    <property type="match status" value="1"/>
</dbReference>
<dbReference type="SUPFAM" id="SSF49723">
    <property type="entry name" value="Lipase/lipooxygenase domain (PLAT/LH2 domain)"/>
    <property type="match status" value="1"/>
</dbReference>
<dbReference type="SUPFAM" id="SSF48484">
    <property type="entry name" value="Lipoxigenase"/>
    <property type="match status" value="1"/>
</dbReference>
<dbReference type="PROSITE" id="PS00711">
    <property type="entry name" value="LIPOXYGENASE_1"/>
    <property type="match status" value="1"/>
</dbReference>
<dbReference type="PROSITE" id="PS00081">
    <property type="entry name" value="LIPOXYGENASE_2"/>
    <property type="match status" value="1"/>
</dbReference>
<dbReference type="PROSITE" id="PS51393">
    <property type="entry name" value="LIPOXYGENASE_3"/>
    <property type="match status" value="1"/>
</dbReference>
<dbReference type="PROSITE" id="PS50095">
    <property type="entry name" value="PLAT"/>
    <property type="match status" value="1"/>
</dbReference>
<reference key="1">
    <citation type="journal article" date="2005" name="Nature">
        <title>The map-based sequence of the rice genome.</title>
        <authorList>
            <consortium name="International rice genome sequencing project (IRGSP)"/>
        </authorList>
    </citation>
    <scope>NUCLEOTIDE SEQUENCE [LARGE SCALE GENOMIC DNA]</scope>
    <source>
        <strain>cv. Nipponbare</strain>
    </source>
</reference>
<reference key="2">
    <citation type="journal article" date="2008" name="Nucleic Acids Res.">
        <title>The rice annotation project database (RAP-DB): 2008 update.</title>
        <authorList>
            <consortium name="The rice annotation project (RAP)"/>
        </authorList>
    </citation>
    <scope>GENOME REANNOTATION</scope>
    <source>
        <strain>cv. Nipponbare</strain>
    </source>
</reference>
<reference key="3">
    <citation type="journal article" date="2013" name="Rice">
        <title>Improvement of the Oryza sativa Nipponbare reference genome using next generation sequence and optical map data.</title>
        <authorList>
            <person name="Kawahara Y."/>
            <person name="de la Bastide M."/>
            <person name="Hamilton J.P."/>
            <person name="Kanamori H."/>
            <person name="McCombie W.R."/>
            <person name="Ouyang S."/>
            <person name="Schwartz D.C."/>
            <person name="Tanaka T."/>
            <person name="Wu J."/>
            <person name="Zhou S."/>
            <person name="Childs K.L."/>
            <person name="Davidson R.M."/>
            <person name="Lin H."/>
            <person name="Quesada-Ocampo L."/>
            <person name="Vaillancourt B."/>
            <person name="Sakai H."/>
            <person name="Lee S.S."/>
            <person name="Kim J."/>
            <person name="Numa H."/>
            <person name="Itoh T."/>
            <person name="Buell C.R."/>
            <person name="Matsumoto T."/>
        </authorList>
    </citation>
    <scope>GENOME REANNOTATION</scope>
    <source>
        <strain>cv. Nipponbare</strain>
    </source>
</reference>
<reference key="4">
    <citation type="journal article" date="2003" name="Science">
        <title>Collection, mapping, and annotation of over 28,000 cDNA clones from japonica rice.</title>
        <authorList>
            <consortium name="The rice full-length cDNA consortium"/>
        </authorList>
    </citation>
    <scope>NUCLEOTIDE SEQUENCE [LARGE SCALE MRNA]</scope>
    <source>
        <strain>cv. Nipponbare</strain>
    </source>
</reference>
<reference key="5">
    <citation type="submission" date="1998-10" db="EMBL/GenBank/DDBJ databases">
        <title>Purification and cDNA cloning of two rice lipoxygenases induced by blast fungus.</title>
        <authorList>
            <person name="Peng Y."/>
            <person name="Hou Z."/>
        </authorList>
    </citation>
    <scope>NUCLEOTIDE SEQUENCE [MRNA] OF 259-941</scope>
    <source>
        <strain>cv. Aichi asahi</strain>
        <tissue>Seedling leaf</tissue>
    </source>
</reference>
<organism>
    <name type="scientific">Oryza sativa subsp. japonica</name>
    <name type="common">Rice</name>
    <dbReference type="NCBI Taxonomy" id="39947"/>
    <lineage>
        <taxon>Eukaryota</taxon>
        <taxon>Viridiplantae</taxon>
        <taxon>Streptophyta</taxon>
        <taxon>Embryophyta</taxon>
        <taxon>Tracheophyta</taxon>
        <taxon>Spermatophyta</taxon>
        <taxon>Magnoliopsida</taxon>
        <taxon>Liliopsida</taxon>
        <taxon>Poales</taxon>
        <taxon>Poaceae</taxon>
        <taxon>BOP clade</taxon>
        <taxon>Oryzoideae</taxon>
        <taxon>Oryzeae</taxon>
        <taxon>Oryzinae</taxon>
        <taxon>Oryza</taxon>
        <taxon>Oryza sativa</taxon>
    </lineage>
</organism>
<accession>Q84YK8</accession>
<accession>Q0J4K1</accession>
<accession>Q7EXZ6</accession>
<accession>Q9XHM6</accession>
<evidence type="ECO:0000250" key="1"/>
<evidence type="ECO:0000255" key="2"/>
<evidence type="ECO:0000255" key="3">
    <source>
        <dbReference type="PROSITE-ProRule" id="PRU00152"/>
    </source>
</evidence>
<evidence type="ECO:0000255" key="4">
    <source>
        <dbReference type="PROSITE-ProRule" id="PRU00726"/>
    </source>
</evidence>
<evidence type="ECO:0000256" key="5">
    <source>
        <dbReference type="SAM" id="MobiDB-lite"/>
    </source>
</evidence>
<evidence type="ECO:0000305" key="6"/>
<gene>
    <name type="primary">CM-LOX2</name>
    <name type="ordered locus">Os08g0509100</name>
    <name type="ordered locus">LOC_Os08g39850</name>
    <name type="ORF">B1168A08.28-1</name>
    <name type="ORF">B1168A08.28-2</name>
    <name type="ORF">OSJNBa0016N23.103-1</name>
    <name type="ORF">OSJNBa0016N23.103-2</name>
</gene>
<keyword id="KW-0150">Chloroplast</keyword>
<keyword id="KW-0223">Dioxygenase</keyword>
<keyword id="KW-0275">Fatty acid biosynthesis</keyword>
<keyword id="KW-0276">Fatty acid metabolism</keyword>
<keyword id="KW-0408">Iron</keyword>
<keyword id="KW-0444">Lipid biosynthesis</keyword>
<keyword id="KW-0443">Lipid metabolism</keyword>
<keyword id="KW-0479">Metal-binding</keyword>
<keyword id="KW-0560">Oxidoreductase</keyword>
<keyword id="KW-0925">Oxylipin biosynthesis</keyword>
<keyword id="KW-0934">Plastid</keyword>
<keyword id="KW-1185">Reference proteome</keyword>
<keyword id="KW-0809">Transit peptide</keyword>
<feature type="transit peptide" description="Chloroplast" evidence="2">
    <location>
        <begin position="1"/>
        <end position="67"/>
    </location>
</feature>
<feature type="chain" id="PRO_0000018328" description="Probable lipoxygenase 8, chloroplastic">
    <location>
        <begin position="68"/>
        <end position="941"/>
    </location>
</feature>
<feature type="domain" description="PLAT" evidence="3">
    <location>
        <begin position="100"/>
        <end position="236"/>
    </location>
</feature>
<feature type="domain" description="Lipoxygenase" evidence="4">
    <location>
        <begin position="242"/>
        <end position="941"/>
    </location>
</feature>
<feature type="region of interest" description="Disordered" evidence="5">
    <location>
        <begin position="1"/>
        <end position="22"/>
    </location>
</feature>
<feature type="region of interest" description="Disordered" evidence="5">
    <location>
        <begin position="45"/>
        <end position="68"/>
    </location>
</feature>
<feature type="region of interest" description="Disordered" evidence="5">
    <location>
        <begin position="255"/>
        <end position="274"/>
    </location>
</feature>
<feature type="region of interest" description="Disordered" evidence="5">
    <location>
        <begin position="288"/>
        <end position="331"/>
    </location>
</feature>
<feature type="compositionally biased region" description="Basic and acidic residues" evidence="5">
    <location>
        <begin position="319"/>
        <end position="331"/>
    </location>
</feature>
<feature type="binding site" evidence="4">
    <location>
        <position position="598"/>
    </location>
    <ligand>
        <name>Fe cation</name>
        <dbReference type="ChEBI" id="CHEBI:24875"/>
        <note>catalytic</note>
    </ligand>
</feature>
<feature type="binding site" evidence="4">
    <location>
        <position position="603"/>
    </location>
    <ligand>
        <name>Fe cation</name>
        <dbReference type="ChEBI" id="CHEBI:24875"/>
        <note>catalytic</note>
    </ligand>
</feature>
<feature type="binding site" evidence="4">
    <location>
        <position position="790"/>
    </location>
    <ligand>
        <name>Fe cation</name>
        <dbReference type="ChEBI" id="CHEBI:24875"/>
        <note>catalytic</note>
    </ligand>
</feature>
<feature type="binding site" evidence="4">
    <location>
        <position position="794"/>
    </location>
    <ligand>
        <name>Fe cation</name>
        <dbReference type="ChEBI" id="CHEBI:24875"/>
        <note>catalytic</note>
    </ligand>
</feature>
<feature type="binding site" evidence="4">
    <location>
        <position position="941"/>
    </location>
    <ligand>
        <name>Fe cation</name>
        <dbReference type="ChEBI" id="CHEBI:24875"/>
        <note>catalytic</note>
    </ligand>
</feature>
<feature type="sequence conflict" description="In Ref. 5; AAD42043." evidence="6" ref="5">
    <original>A</original>
    <variation>T</variation>
    <location>
        <position position="590"/>
    </location>
</feature>
<feature type="sequence conflict" description="In Ref. 5; AAD42043." evidence="6" ref="5">
    <original>A</original>
    <variation>T</variation>
    <location>
        <position position="639"/>
    </location>
</feature>
<feature type="sequence conflict" description="In Ref. 5; AAD42043." evidence="6" ref="5">
    <original>A</original>
    <variation>T</variation>
    <location>
        <position position="711"/>
    </location>
</feature>
<proteinExistence type="evidence at transcript level"/>
<comment type="function">
    <text evidence="1">Plant lipoxygenase may be involved in a number of diverse aspects of plant physiology including growth and development, pest resistance, and senescence or responses to wounding. It catalyzes the hydroperoxidation of lipids containing a cis,cis-1,4-pentadiene structure (By similarity).</text>
</comment>
<comment type="catalytic activity">
    <reaction>
        <text>(9Z,12Z)-octadecadienoate + O2 = (13S)-hydroperoxy-(9Z,11E)-octadecadienoate</text>
        <dbReference type="Rhea" id="RHEA:22780"/>
        <dbReference type="ChEBI" id="CHEBI:15379"/>
        <dbReference type="ChEBI" id="CHEBI:30245"/>
        <dbReference type="ChEBI" id="CHEBI:57466"/>
        <dbReference type="EC" id="1.13.11.12"/>
    </reaction>
</comment>
<comment type="catalytic activity">
    <reaction>
        <text>(9Z,12Z,15Z)-octadecatrienoate + O2 = (13S)-hydroperoxy-(9Z,11E,15Z)-octadecatrienoate</text>
        <dbReference type="Rhea" id="RHEA:34495"/>
        <dbReference type="ChEBI" id="CHEBI:15379"/>
        <dbReference type="ChEBI" id="CHEBI:32387"/>
        <dbReference type="ChEBI" id="CHEBI:58757"/>
        <dbReference type="EC" id="1.13.11.12"/>
    </reaction>
</comment>
<comment type="cofactor">
    <cofactor evidence="4">
        <name>Fe cation</name>
        <dbReference type="ChEBI" id="CHEBI:24875"/>
    </cofactor>
    <text evidence="4">Binds 1 Fe cation per subunit. Iron is tightly bound.</text>
</comment>
<comment type="pathway">
    <text evidence="4">Lipid metabolism; oxylipin biosynthesis.</text>
</comment>
<comment type="subcellular location">
    <subcellularLocation>
        <location evidence="6">Plastid</location>
        <location evidence="6">Chloroplast</location>
    </subcellularLocation>
</comment>
<comment type="similarity">
    <text evidence="6">Belongs to the lipoxygenase family.</text>
</comment>
<comment type="sequence caution" evidence="6">
    <conflict type="erroneous gene model prediction">
        <sequence resource="EMBL-CDS" id="BAD10669"/>
    </conflict>
</comment>
<comment type="sequence caution" evidence="6">
    <conflict type="erroneous gene model prediction">
        <sequence resource="EMBL-CDS" id="BAD10729"/>
    </conflict>
</comment>
<protein>
    <recommendedName>
        <fullName>Probable lipoxygenase 8, chloroplastic</fullName>
        <ecNumber>1.13.11.12</ecNumber>
    </recommendedName>
</protein>